<gene>
    <name type="ordered locus">YKL123W</name>
</gene>
<reference key="1">
    <citation type="journal article" date="1992" name="Yeast">
        <title>Sequence of a segment of yeast chromosome XI identifies a new mitochondrial carrier, a new member of the G protein family, and a protein with the PAAKK motif of the H1 histones.</title>
        <authorList>
            <person name="Colleaux L."/>
            <person name="Richard G.-F."/>
            <person name="Thierry A."/>
            <person name="Dujon B."/>
        </authorList>
    </citation>
    <scope>NUCLEOTIDE SEQUENCE [GENOMIC DNA]</scope>
</reference>
<reference key="2">
    <citation type="journal article" date="1994" name="Nature">
        <title>Complete DNA sequence of yeast chromosome XI.</title>
        <authorList>
            <person name="Dujon B."/>
            <person name="Alexandraki D."/>
            <person name="Andre B."/>
            <person name="Ansorge W."/>
            <person name="Baladron V."/>
            <person name="Ballesta J.P.G."/>
            <person name="Banrevi A."/>
            <person name="Bolle P.-A."/>
            <person name="Bolotin-Fukuhara M."/>
            <person name="Bossier P."/>
            <person name="Bou G."/>
            <person name="Boyer J."/>
            <person name="Buitrago M.J."/>
            <person name="Cheret G."/>
            <person name="Colleaux L."/>
            <person name="Daignan-Fornier B."/>
            <person name="del Rey F."/>
            <person name="Dion C."/>
            <person name="Domdey H."/>
            <person name="Duesterhoeft A."/>
            <person name="Duesterhus S."/>
            <person name="Entian K.-D."/>
            <person name="Erfle H."/>
            <person name="Esteban P.F."/>
            <person name="Feldmann H."/>
            <person name="Fernandes L."/>
            <person name="Fobo G.M."/>
            <person name="Fritz C."/>
            <person name="Fukuhara H."/>
            <person name="Gabel C."/>
            <person name="Gaillon L."/>
            <person name="Garcia-Cantalejo J.M."/>
            <person name="Garcia-Ramirez J.J."/>
            <person name="Gent M.E."/>
            <person name="Ghazvini M."/>
            <person name="Goffeau A."/>
            <person name="Gonzalez A."/>
            <person name="Grothues D."/>
            <person name="Guerreiro P."/>
            <person name="Hegemann J.H."/>
            <person name="Hewitt N."/>
            <person name="Hilger F."/>
            <person name="Hollenberg C.P."/>
            <person name="Horaitis O."/>
            <person name="Indge K.J."/>
            <person name="Jacquier A."/>
            <person name="James C.M."/>
            <person name="Jauniaux J.-C."/>
            <person name="Jimenez A."/>
            <person name="Keuchel H."/>
            <person name="Kirchrath L."/>
            <person name="Kleine K."/>
            <person name="Koetter P."/>
            <person name="Legrain P."/>
            <person name="Liebl S."/>
            <person name="Louis E.J."/>
            <person name="Maia e Silva A."/>
            <person name="Marck C."/>
            <person name="Monnier A.-L."/>
            <person name="Moestl D."/>
            <person name="Mueller S."/>
            <person name="Obermaier B."/>
            <person name="Oliver S.G."/>
            <person name="Pallier C."/>
            <person name="Pascolo S."/>
            <person name="Pfeiffer F."/>
            <person name="Philippsen P."/>
            <person name="Planta R.J."/>
            <person name="Pohl F.M."/>
            <person name="Pohl T.M."/>
            <person name="Poehlmann R."/>
            <person name="Portetelle D."/>
            <person name="Purnelle B."/>
            <person name="Puzos V."/>
            <person name="Ramezani Rad M."/>
            <person name="Rasmussen S.W."/>
            <person name="Remacha M.A."/>
            <person name="Revuelta J.L."/>
            <person name="Richard G.-F."/>
            <person name="Rieger M."/>
            <person name="Rodrigues-Pousada C."/>
            <person name="Rose M."/>
            <person name="Rupp T."/>
            <person name="Santos M.A."/>
            <person name="Schwager C."/>
            <person name="Sensen C."/>
            <person name="Skala J."/>
            <person name="Soares H."/>
            <person name="Sor F."/>
            <person name="Stegemann J."/>
            <person name="Tettelin H."/>
            <person name="Thierry A."/>
            <person name="Tzermia M."/>
            <person name="Urrestarazu L.A."/>
            <person name="van Dyck L."/>
            <person name="van Vliet-Reedijk J.C."/>
            <person name="Valens M."/>
            <person name="Vandenbol M."/>
            <person name="Vilela C."/>
            <person name="Vissers S."/>
            <person name="von Wettstein D."/>
            <person name="Voss H."/>
            <person name="Wiemann S."/>
            <person name="Xu G."/>
            <person name="Zimmermann J."/>
            <person name="Haasemann M."/>
            <person name="Becker I."/>
            <person name="Mewes H.-W."/>
        </authorList>
    </citation>
    <scope>NUCLEOTIDE SEQUENCE [LARGE SCALE GENOMIC DNA]</scope>
    <source>
        <strain>ATCC 204508 / S288c</strain>
    </source>
</reference>
<reference key="3">
    <citation type="journal article" date="2014" name="G3 (Bethesda)">
        <title>The reference genome sequence of Saccharomyces cerevisiae: Then and now.</title>
        <authorList>
            <person name="Engel S.R."/>
            <person name="Dietrich F.S."/>
            <person name="Fisk D.G."/>
            <person name="Binkley G."/>
            <person name="Balakrishnan R."/>
            <person name="Costanzo M.C."/>
            <person name="Dwight S.S."/>
            <person name="Hitz B.C."/>
            <person name="Karra K."/>
            <person name="Nash R.S."/>
            <person name="Weng S."/>
            <person name="Wong E.D."/>
            <person name="Lloyd P."/>
            <person name="Skrzypek M.S."/>
            <person name="Miyasato S.R."/>
            <person name="Simison M."/>
            <person name="Cherry J.M."/>
        </authorList>
    </citation>
    <scope>GENOME REANNOTATION</scope>
    <source>
        <strain>ATCC 204508 / S288c</strain>
    </source>
</reference>
<reference key="4">
    <citation type="journal article" date="2007" name="Genome Res.">
        <title>Approaching a complete repository of sequence-verified protein-encoding clones for Saccharomyces cerevisiae.</title>
        <authorList>
            <person name="Hu Y."/>
            <person name="Rolfs A."/>
            <person name="Bhullar B."/>
            <person name="Murthy T.V.S."/>
            <person name="Zhu C."/>
            <person name="Berger M.F."/>
            <person name="Camargo A.A."/>
            <person name="Kelley F."/>
            <person name="McCarron S."/>
            <person name="Jepson D."/>
            <person name="Richardson A."/>
            <person name="Raphael J."/>
            <person name="Moreira D."/>
            <person name="Taycher E."/>
            <person name="Zuo D."/>
            <person name="Mohr S."/>
            <person name="Kane M.F."/>
            <person name="Williamson J."/>
            <person name="Simpson A.J.G."/>
            <person name="Bulyk M.L."/>
            <person name="Harlow E."/>
            <person name="Marsischky G."/>
            <person name="Kolodner R.D."/>
            <person name="LaBaer J."/>
        </authorList>
    </citation>
    <scope>NUCLEOTIDE SEQUENCE [GENOMIC DNA]</scope>
    <source>
        <strain>ATCC 204508 / S288c</strain>
    </source>
</reference>
<name>YKM3_YEAST</name>
<proteinExistence type="uncertain"/>
<organism>
    <name type="scientific">Saccharomyces cerevisiae (strain ATCC 204508 / S288c)</name>
    <name type="common">Baker's yeast</name>
    <dbReference type="NCBI Taxonomy" id="559292"/>
    <lineage>
        <taxon>Eukaryota</taxon>
        <taxon>Fungi</taxon>
        <taxon>Dikarya</taxon>
        <taxon>Ascomycota</taxon>
        <taxon>Saccharomycotina</taxon>
        <taxon>Saccharomycetes</taxon>
        <taxon>Saccharomycetales</taxon>
        <taxon>Saccharomycetaceae</taxon>
        <taxon>Saccharomyces</taxon>
    </lineage>
</organism>
<dbReference type="EMBL" id="Z28123">
    <property type="protein sequence ID" value="CAA81965.1"/>
    <property type="molecule type" value="Genomic_DNA"/>
</dbReference>
<dbReference type="EMBL" id="S44213">
    <property type="status" value="NOT_ANNOTATED_CDS"/>
    <property type="molecule type" value="Genomic_DNA"/>
</dbReference>
<dbReference type="EMBL" id="AY558354">
    <property type="protein sequence ID" value="AAS56680.1"/>
    <property type="molecule type" value="Genomic_DNA"/>
</dbReference>
<dbReference type="PIR" id="S37951">
    <property type="entry name" value="S37951"/>
</dbReference>
<dbReference type="PaxDb" id="4932-YKL123W"/>
<dbReference type="EnsemblFungi" id="YKL123W_mRNA">
    <property type="protein sequence ID" value="YKL123W"/>
    <property type="gene ID" value="YKL123W"/>
</dbReference>
<dbReference type="AGR" id="SGD:S000001606"/>
<dbReference type="SGD" id="S000001606">
    <property type="gene designation" value="YKL123W"/>
</dbReference>
<dbReference type="HOGENOM" id="CLU_1983304_0_0_1"/>
<accession>P36071</accession>
<protein>
    <recommendedName>
        <fullName>Putative uncharacterized protein YKL123W</fullName>
    </recommendedName>
</protein>
<comment type="miscellaneous">
    <text evidence="1">Partially overlaps SSH4.</text>
</comment>
<comment type="caution">
    <text evidence="2">Product of a dubious gene prediction unlikely to encode a functional protein. Because of that it is not part of the S.cerevisiae S288c complete/reference proteome set.</text>
</comment>
<feature type="chain" id="PRO_0000203154" description="Putative uncharacterized protein YKL123W">
    <location>
        <begin position="1"/>
        <end position="126"/>
    </location>
</feature>
<evidence type="ECO:0000305" key="1"/>
<evidence type="ECO:0000305" key="2">
    <source>
    </source>
</evidence>
<sequence>MKESLLTLTEKIMFTTTVLKPTITTPITMLITTMRTLVAMKIRHYWKMMAIKDRKIQIPPVKYQMELSIRTLEINLLKNVKETEANLLKRRTDRENKRHYEFGFFYNLRIHNIYIPTSFFFFNSIV</sequence>